<sequence length="505" mass="54416">MLLPRWFAEALLLLLSILACSNAAFIGVNIGTDLTNMPPPSDIVTLLKSQQITHVRLYDANSHMLKAFANTSIEVMVGVTNEEILKIGRFPSAAAAWVNKNVAAYIPSTNITAIAVGSEVLTTIPHVAPILASALNNIHKALVASNLNFKVKVSSPMSMDIMPKPFPPSTSTFSPSWNTTVYQLLQFLKNTGSFFMLNAYPYYGYTTANGIFPLDYALFKQLSPVKQIVDPNTLLHYNSMFDAMVDAAYYSMEALNFSKIPVVVTETGWPSSGGSDEAAATVANAETFNTNLIKRVLNNSGPPSQPDIPINTYIYELYNEDKRSGPVSERNWGILFPNGTSVYPLSLSGGSSSAALNGSSMFCVAKADADDDKLVDGLNWACGQGRANCAAIQPGQPCYLPNDVKSHASFAFNDYYQKMKSAGGTCDFDGTAITTTRDPSYRTCAYTGSLNANATNGNFPPDALGPASPLGGNANARIIFSYHLPILAPLALTLLQLLLQHDRLL</sequence>
<accession>Q94CD8</accession>
<accession>B9DGU2</accession>
<accession>Q9LJD6</accession>
<comment type="catalytic activity">
    <reaction>
        <text>Hydrolysis of (1-&gt;3)-beta-D-glucosidic linkages in (1-&gt;3)-beta-D-glucans.</text>
        <dbReference type="EC" id="3.2.1.39"/>
    </reaction>
</comment>
<comment type="subcellular location">
    <subcellularLocation>
        <location>Cell membrane</location>
        <topology>Lipid-anchor</topology>
        <topology>GPI-anchor</topology>
    </subcellularLocation>
</comment>
<comment type="PTM">
    <text evidence="1">Contains two additional disulfide bonds.</text>
</comment>
<comment type="similarity">
    <text evidence="4">Belongs to the glycosyl hydrolase 17 family.</text>
</comment>
<comment type="sequence caution" evidence="4">
    <conflict type="erroneous gene model prediction">
        <sequence resource="EMBL-CDS" id="BAB01763"/>
    </conflict>
</comment>
<feature type="signal peptide" evidence="3">
    <location>
        <begin position="1"/>
        <end position="23"/>
    </location>
</feature>
<feature type="chain" id="PRO_0000011888" description="Glucan endo-1,3-beta-glucosidase 4">
    <location>
        <begin position="24"/>
        <end position="474"/>
    </location>
</feature>
<feature type="propeptide" id="PRO_0000011889" description="Removed in mature form" evidence="3">
    <location>
        <begin position="475"/>
        <end position="505"/>
    </location>
</feature>
<feature type="active site" description="Proton donor" evidence="2">
    <location>
        <position position="119"/>
    </location>
</feature>
<feature type="active site" description="Nucleophile" evidence="2">
    <location>
        <position position="266"/>
    </location>
</feature>
<feature type="lipid moiety-binding region" description="GPI-anchor amidated alanine" evidence="3">
    <location>
        <position position="474"/>
    </location>
</feature>
<feature type="glycosylation site" description="N-linked (GlcNAc...) asparagine" evidence="3">
    <location>
        <position position="70"/>
    </location>
</feature>
<feature type="glycosylation site" description="N-linked (GlcNAc...) asparagine" evidence="3">
    <location>
        <position position="110"/>
    </location>
</feature>
<feature type="glycosylation site" description="N-linked (GlcNAc...) asparagine" evidence="3">
    <location>
        <position position="178"/>
    </location>
</feature>
<feature type="glycosylation site" description="N-linked (GlcNAc...) asparagine" evidence="3">
    <location>
        <position position="256"/>
    </location>
</feature>
<feature type="glycosylation site" description="N-linked (GlcNAc...) asparagine" evidence="3">
    <location>
        <position position="298"/>
    </location>
</feature>
<feature type="glycosylation site" description="N-linked (GlcNAc...) asparagine" evidence="3">
    <location>
        <position position="338"/>
    </location>
</feature>
<feature type="glycosylation site" description="N-linked (GlcNAc...) asparagine" evidence="3">
    <location>
        <position position="357"/>
    </location>
</feature>
<feature type="glycosylation site" description="N-linked (GlcNAc...) asparagine" evidence="3">
    <location>
        <position position="453"/>
    </location>
</feature>
<feature type="disulfide bond" evidence="1">
    <location>
        <begin position="363"/>
        <end position="426"/>
    </location>
</feature>
<gene>
    <name type="ordered locus">At3g13560</name>
    <name type="ORF">MRP15.22</name>
</gene>
<reference key="1">
    <citation type="journal article" date="2000" name="DNA Res.">
        <title>Structural analysis of Arabidopsis thaliana chromosome 3. II. Sequence features of the 4,251,695 bp regions covered by 90 P1, TAC and BAC clones.</title>
        <authorList>
            <person name="Kaneko T."/>
            <person name="Katoh T."/>
            <person name="Sato S."/>
            <person name="Nakamura Y."/>
            <person name="Asamizu E."/>
            <person name="Tabata S."/>
        </authorList>
    </citation>
    <scope>NUCLEOTIDE SEQUENCE [LARGE SCALE GENOMIC DNA]</scope>
    <source>
        <strain>cv. Columbia</strain>
    </source>
</reference>
<reference key="2">
    <citation type="journal article" date="2017" name="Plant J.">
        <title>Araport11: a complete reannotation of the Arabidopsis thaliana reference genome.</title>
        <authorList>
            <person name="Cheng C.Y."/>
            <person name="Krishnakumar V."/>
            <person name="Chan A.P."/>
            <person name="Thibaud-Nissen F."/>
            <person name="Schobel S."/>
            <person name="Town C.D."/>
        </authorList>
    </citation>
    <scope>GENOME REANNOTATION</scope>
    <source>
        <strain>cv. Columbia</strain>
    </source>
</reference>
<reference key="3">
    <citation type="journal article" date="2003" name="Science">
        <title>Empirical analysis of transcriptional activity in the Arabidopsis genome.</title>
        <authorList>
            <person name="Yamada K."/>
            <person name="Lim J."/>
            <person name="Dale J.M."/>
            <person name="Chen H."/>
            <person name="Shinn P."/>
            <person name="Palm C.J."/>
            <person name="Southwick A.M."/>
            <person name="Wu H.C."/>
            <person name="Kim C.J."/>
            <person name="Nguyen M."/>
            <person name="Pham P.K."/>
            <person name="Cheuk R.F."/>
            <person name="Karlin-Newmann G."/>
            <person name="Liu S.X."/>
            <person name="Lam B."/>
            <person name="Sakano H."/>
            <person name="Wu T."/>
            <person name="Yu G."/>
            <person name="Miranda M."/>
            <person name="Quach H.L."/>
            <person name="Tripp M."/>
            <person name="Chang C.H."/>
            <person name="Lee J.M."/>
            <person name="Toriumi M.J."/>
            <person name="Chan M.M."/>
            <person name="Tang C.C."/>
            <person name="Onodera C.S."/>
            <person name="Deng J.M."/>
            <person name="Akiyama K."/>
            <person name="Ansari Y."/>
            <person name="Arakawa T."/>
            <person name="Banh J."/>
            <person name="Banno F."/>
            <person name="Bowser L."/>
            <person name="Brooks S.Y."/>
            <person name="Carninci P."/>
            <person name="Chao Q."/>
            <person name="Choy N."/>
            <person name="Enju A."/>
            <person name="Goldsmith A.D."/>
            <person name="Gurjal M."/>
            <person name="Hansen N.F."/>
            <person name="Hayashizaki Y."/>
            <person name="Johnson-Hopson C."/>
            <person name="Hsuan V.W."/>
            <person name="Iida K."/>
            <person name="Karnes M."/>
            <person name="Khan S."/>
            <person name="Koesema E."/>
            <person name="Ishida J."/>
            <person name="Jiang P.X."/>
            <person name="Jones T."/>
            <person name="Kawai J."/>
            <person name="Kamiya A."/>
            <person name="Meyers C."/>
            <person name="Nakajima M."/>
            <person name="Narusaka M."/>
            <person name="Seki M."/>
            <person name="Sakurai T."/>
            <person name="Satou M."/>
            <person name="Tamse R."/>
            <person name="Vaysberg M."/>
            <person name="Wallender E.K."/>
            <person name="Wong C."/>
            <person name="Yamamura Y."/>
            <person name="Yuan S."/>
            <person name="Shinozaki K."/>
            <person name="Davis R.W."/>
            <person name="Theologis A."/>
            <person name="Ecker J.R."/>
        </authorList>
    </citation>
    <scope>NUCLEOTIDE SEQUENCE [LARGE SCALE MRNA]</scope>
    <source>
        <strain>cv. Columbia</strain>
    </source>
</reference>
<reference key="4">
    <citation type="journal article" date="2009" name="DNA Res.">
        <title>Analysis of multiple occurrences of alternative splicing events in Arabidopsis thaliana using novel sequenced full-length cDNAs.</title>
        <authorList>
            <person name="Iida K."/>
            <person name="Fukami-Kobayashi K."/>
            <person name="Toyoda A."/>
            <person name="Sakaki Y."/>
            <person name="Kobayashi M."/>
            <person name="Seki M."/>
            <person name="Shinozaki K."/>
        </authorList>
    </citation>
    <scope>NUCLEOTIDE SEQUENCE [LARGE SCALE MRNA]</scope>
    <source>
        <strain>cv. Columbia</strain>
    </source>
</reference>
<organism>
    <name type="scientific">Arabidopsis thaliana</name>
    <name type="common">Mouse-ear cress</name>
    <dbReference type="NCBI Taxonomy" id="3702"/>
    <lineage>
        <taxon>Eukaryota</taxon>
        <taxon>Viridiplantae</taxon>
        <taxon>Streptophyta</taxon>
        <taxon>Embryophyta</taxon>
        <taxon>Tracheophyta</taxon>
        <taxon>Spermatophyta</taxon>
        <taxon>Magnoliopsida</taxon>
        <taxon>eudicotyledons</taxon>
        <taxon>Gunneridae</taxon>
        <taxon>Pentapetalae</taxon>
        <taxon>rosids</taxon>
        <taxon>malvids</taxon>
        <taxon>Brassicales</taxon>
        <taxon>Brassicaceae</taxon>
        <taxon>Camelineae</taxon>
        <taxon>Arabidopsis</taxon>
    </lineage>
</organism>
<name>E134_ARATH</name>
<keyword id="KW-1003">Cell membrane</keyword>
<keyword id="KW-1015">Disulfide bond</keyword>
<keyword id="KW-0325">Glycoprotein</keyword>
<keyword id="KW-0326">Glycosidase</keyword>
<keyword id="KW-0336">GPI-anchor</keyword>
<keyword id="KW-0378">Hydrolase</keyword>
<keyword id="KW-0449">Lipoprotein</keyword>
<keyword id="KW-0472">Membrane</keyword>
<keyword id="KW-0611">Plant defense</keyword>
<keyword id="KW-1185">Reference proteome</keyword>
<keyword id="KW-0732">Signal</keyword>
<protein>
    <recommendedName>
        <fullName>Glucan endo-1,3-beta-glucosidase 4</fullName>
        <ecNumber>3.2.1.39</ecNumber>
    </recommendedName>
    <alternativeName>
        <fullName>(1-&gt;3)-beta-glucan endohydrolase 4</fullName>
        <shortName>(1-&gt;3)-beta-glucanase 4</shortName>
    </alternativeName>
    <alternativeName>
        <fullName>Beta-1,3-endoglucanase 4</fullName>
        <shortName>Beta-1,3-glucanase 4</shortName>
    </alternativeName>
</protein>
<proteinExistence type="evidence at transcript level"/>
<evidence type="ECO:0000250" key="1"/>
<evidence type="ECO:0000250" key="2">
    <source>
        <dbReference type="UniProtKB" id="O22317"/>
    </source>
</evidence>
<evidence type="ECO:0000255" key="3"/>
<evidence type="ECO:0000305" key="4"/>
<dbReference type="EC" id="3.2.1.39"/>
<dbReference type="EMBL" id="AP000603">
    <property type="protein sequence ID" value="BAB01763.1"/>
    <property type="status" value="ALT_SEQ"/>
    <property type="molecule type" value="Genomic_DNA"/>
</dbReference>
<dbReference type="EMBL" id="CP002686">
    <property type="protein sequence ID" value="AEE75372.1"/>
    <property type="molecule type" value="Genomic_DNA"/>
</dbReference>
<dbReference type="EMBL" id="CP002686">
    <property type="protein sequence ID" value="AEE75373.1"/>
    <property type="molecule type" value="Genomic_DNA"/>
</dbReference>
<dbReference type="EMBL" id="CP002686">
    <property type="protein sequence ID" value="AEE75374.1"/>
    <property type="molecule type" value="Genomic_DNA"/>
</dbReference>
<dbReference type="EMBL" id="CP002686">
    <property type="protein sequence ID" value="ANM64915.1"/>
    <property type="molecule type" value="Genomic_DNA"/>
</dbReference>
<dbReference type="EMBL" id="CP002686">
    <property type="protein sequence ID" value="ANM64916.1"/>
    <property type="molecule type" value="Genomic_DNA"/>
</dbReference>
<dbReference type="EMBL" id="AY034940">
    <property type="protein sequence ID" value="AAK59446.1"/>
    <property type="molecule type" value="mRNA"/>
</dbReference>
<dbReference type="EMBL" id="AY063117">
    <property type="protein sequence ID" value="AAL34291.1"/>
    <property type="molecule type" value="mRNA"/>
</dbReference>
<dbReference type="EMBL" id="AK317283">
    <property type="protein sequence ID" value="BAH19959.1"/>
    <property type="molecule type" value="mRNA"/>
</dbReference>
<dbReference type="RefSeq" id="NP_001326916.1">
    <property type="nucleotide sequence ID" value="NM_001338056.1"/>
</dbReference>
<dbReference type="RefSeq" id="NP_001326917.1">
    <property type="nucleotide sequence ID" value="NM_001338055.1"/>
</dbReference>
<dbReference type="RefSeq" id="NP_187965.1">
    <property type="nucleotide sequence ID" value="NM_112202.5"/>
</dbReference>
<dbReference type="RefSeq" id="NP_974302.1">
    <property type="nucleotide sequence ID" value="NM_202573.3"/>
</dbReference>
<dbReference type="RefSeq" id="NP_974303.1">
    <property type="nucleotide sequence ID" value="NM_202574.3"/>
</dbReference>
<dbReference type="SMR" id="Q94CD8"/>
<dbReference type="FunCoup" id="Q94CD8">
    <property type="interactions" value="293"/>
</dbReference>
<dbReference type="STRING" id="3702.Q94CD8"/>
<dbReference type="CAZy" id="CBM43">
    <property type="family name" value="Carbohydrate-Binding Module Family 43"/>
</dbReference>
<dbReference type="CAZy" id="GH17">
    <property type="family name" value="Glycoside Hydrolase Family 17"/>
</dbReference>
<dbReference type="GlyGen" id="Q94CD8">
    <property type="glycosylation" value="8 sites"/>
</dbReference>
<dbReference type="PaxDb" id="3702-AT3G13560.2"/>
<dbReference type="ProteomicsDB" id="222007"/>
<dbReference type="EnsemblPlants" id="AT3G13560.1">
    <property type="protein sequence ID" value="AT3G13560.1"/>
    <property type="gene ID" value="AT3G13560"/>
</dbReference>
<dbReference type="EnsemblPlants" id="AT3G13560.2">
    <property type="protein sequence ID" value="AT3G13560.2"/>
    <property type="gene ID" value="AT3G13560"/>
</dbReference>
<dbReference type="EnsemblPlants" id="AT3G13560.3">
    <property type="protein sequence ID" value="AT3G13560.3"/>
    <property type="gene ID" value="AT3G13560"/>
</dbReference>
<dbReference type="EnsemblPlants" id="AT3G13560.4">
    <property type="protein sequence ID" value="AT3G13560.4"/>
    <property type="gene ID" value="AT3G13560"/>
</dbReference>
<dbReference type="EnsemblPlants" id="AT3G13560.5">
    <property type="protein sequence ID" value="AT3G13560.5"/>
    <property type="gene ID" value="AT3G13560"/>
</dbReference>
<dbReference type="GeneID" id="820558"/>
<dbReference type="Gramene" id="AT3G13560.1">
    <property type="protein sequence ID" value="AT3G13560.1"/>
    <property type="gene ID" value="AT3G13560"/>
</dbReference>
<dbReference type="Gramene" id="AT3G13560.2">
    <property type="protein sequence ID" value="AT3G13560.2"/>
    <property type="gene ID" value="AT3G13560"/>
</dbReference>
<dbReference type="Gramene" id="AT3G13560.3">
    <property type="protein sequence ID" value="AT3G13560.3"/>
    <property type="gene ID" value="AT3G13560"/>
</dbReference>
<dbReference type="Gramene" id="AT3G13560.4">
    <property type="protein sequence ID" value="AT3G13560.4"/>
    <property type="gene ID" value="AT3G13560"/>
</dbReference>
<dbReference type="Gramene" id="AT3G13560.5">
    <property type="protein sequence ID" value="AT3G13560.5"/>
    <property type="gene ID" value="AT3G13560"/>
</dbReference>
<dbReference type="KEGG" id="ath:AT3G13560"/>
<dbReference type="Araport" id="AT3G13560"/>
<dbReference type="TAIR" id="AT3G13560"/>
<dbReference type="eggNOG" id="ENOG502QS8U">
    <property type="taxonomic scope" value="Eukaryota"/>
</dbReference>
<dbReference type="HOGENOM" id="CLU_024953_3_3_1"/>
<dbReference type="InParanoid" id="Q94CD8"/>
<dbReference type="OMA" id="WGVLFTN"/>
<dbReference type="PhylomeDB" id="Q94CD8"/>
<dbReference type="BioCyc" id="ARA:AT3G13560-MONOMER"/>
<dbReference type="PRO" id="PR:Q94CD8"/>
<dbReference type="Proteomes" id="UP000006548">
    <property type="component" value="Chromosome 3"/>
</dbReference>
<dbReference type="ExpressionAtlas" id="Q94CD8">
    <property type="expression patterns" value="baseline and differential"/>
</dbReference>
<dbReference type="GO" id="GO:0005829">
    <property type="term" value="C:cytosol"/>
    <property type="evidence" value="ECO:0007005"/>
    <property type="project" value="TAIR"/>
</dbReference>
<dbReference type="GO" id="GO:0005886">
    <property type="term" value="C:plasma membrane"/>
    <property type="evidence" value="ECO:0007005"/>
    <property type="project" value="TAIR"/>
</dbReference>
<dbReference type="GO" id="GO:0098552">
    <property type="term" value="C:side of membrane"/>
    <property type="evidence" value="ECO:0007669"/>
    <property type="project" value="UniProtKB-KW"/>
</dbReference>
<dbReference type="GO" id="GO:0042973">
    <property type="term" value="F:glucan endo-1,3-beta-D-glucosidase activity"/>
    <property type="evidence" value="ECO:0007669"/>
    <property type="project" value="UniProtKB-EC"/>
</dbReference>
<dbReference type="GO" id="GO:0005975">
    <property type="term" value="P:carbohydrate metabolic process"/>
    <property type="evidence" value="ECO:0007669"/>
    <property type="project" value="InterPro"/>
</dbReference>
<dbReference type="GO" id="GO:0006952">
    <property type="term" value="P:defense response"/>
    <property type="evidence" value="ECO:0007669"/>
    <property type="project" value="UniProtKB-KW"/>
</dbReference>
<dbReference type="FunFam" id="3.20.20.80:FF:000002">
    <property type="entry name" value="Glucan endo-1,3-beta-glucosidase 3"/>
    <property type="match status" value="1"/>
</dbReference>
<dbReference type="FunFam" id="1.20.58.1040:FF:000001">
    <property type="entry name" value="Glucan endo-1,3-beta-glucosidase 4"/>
    <property type="match status" value="1"/>
</dbReference>
<dbReference type="Gene3D" id="1.20.58.1040">
    <property type="match status" value="1"/>
</dbReference>
<dbReference type="Gene3D" id="3.20.20.80">
    <property type="entry name" value="Glycosidases"/>
    <property type="match status" value="1"/>
</dbReference>
<dbReference type="InterPro" id="IPR000490">
    <property type="entry name" value="Glyco_hydro_17"/>
</dbReference>
<dbReference type="InterPro" id="IPR044965">
    <property type="entry name" value="Glyco_hydro_17_plant"/>
</dbReference>
<dbReference type="InterPro" id="IPR017853">
    <property type="entry name" value="Glycoside_hydrolase_SF"/>
</dbReference>
<dbReference type="InterPro" id="IPR012946">
    <property type="entry name" value="X8"/>
</dbReference>
<dbReference type="PANTHER" id="PTHR32227">
    <property type="entry name" value="GLUCAN ENDO-1,3-BETA-GLUCOSIDASE BG1-RELATED-RELATED"/>
    <property type="match status" value="1"/>
</dbReference>
<dbReference type="Pfam" id="PF00332">
    <property type="entry name" value="Glyco_hydro_17"/>
    <property type="match status" value="1"/>
</dbReference>
<dbReference type="Pfam" id="PF07983">
    <property type="entry name" value="X8"/>
    <property type="match status" value="1"/>
</dbReference>
<dbReference type="SMART" id="SM00768">
    <property type="entry name" value="X8"/>
    <property type="match status" value="1"/>
</dbReference>
<dbReference type="SUPFAM" id="SSF51445">
    <property type="entry name" value="(Trans)glycosidases"/>
    <property type="match status" value="1"/>
</dbReference>
<dbReference type="PROSITE" id="PS00587">
    <property type="entry name" value="GLYCOSYL_HYDROL_F17"/>
    <property type="match status" value="1"/>
</dbReference>